<protein>
    <recommendedName>
        <fullName evidence="1">Probable cell division protein WhiA</fullName>
    </recommendedName>
</protein>
<accession>Q83MY5</accession>
<proteinExistence type="inferred from homology"/>
<gene>
    <name evidence="1" type="primary">whiA</name>
    <name type="ordered locus">TWT_298</name>
</gene>
<comment type="function">
    <text evidence="1">Involved in cell division and chromosome segregation.</text>
</comment>
<comment type="similarity">
    <text evidence="1">Belongs to the WhiA family.</text>
</comment>
<reference key="1">
    <citation type="journal article" date="2003" name="Genome Res.">
        <title>Tropheryma whipplei twist: a human pathogenic Actinobacteria with a reduced genome.</title>
        <authorList>
            <person name="Raoult D."/>
            <person name="Ogata H."/>
            <person name="Audic S."/>
            <person name="Robert C."/>
            <person name="Suhre K."/>
            <person name="Drancourt M."/>
            <person name="Claverie J.-M."/>
        </authorList>
    </citation>
    <scope>NUCLEOTIDE SEQUENCE [LARGE SCALE GENOMIC DNA]</scope>
    <source>
        <strain>Twist</strain>
    </source>
</reference>
<organism>
    <name type="scientific">Tropheryma whipplei (strain Twist)</name>
    <name type="common">Whipple's bacillus</name>
    <dbReference type="NCBI Taxonomy" id="203267"/>
    <lineage>
        <taxon>Bacteria</taxon>
        <taxon>Bacillati</taxon>
        <taxon>Actinomycetota</taxon>
        <taxon>Actinomycetes</taxon>
        <taxon>Micrococcales</taxon>
        <taxon>Tropherymataceae</taxon>
        <taxon>Tropheryma</taxon>
    </lineage>
</organism>
<dbReference type="EMBL" id="AE014184">
    <property type="protein sequence ID" value="AAO44395.1"/>
    <property type="molecule type" value="Genomic_DNA"/>
</dbReference>
<dbReference type="RefSeq" id="WP_011096421.1">
    <property type="nucleotide sequence ID" value="NC_004572.3"/>
</dbReference>
<dbReference type="SMR" id="Q83MY5"/>
<dbReference type="STRING" id="203267.TWT_298"/>
<dbReference type="GeneID" id="67388250"/>
<dbReference type="KEGG" id="twh:TWT_298"/>
<dbReference type="eggNOG" id="COG1481">
    <property type="taxonomic scope" value="Bacteria"/>
</dbReference>
<dbReference type="HOGENOM" id="CLU_053282_0_0_11"/>
<dbReference type="OrthoDB" id="5197218at2"/>
<dbReference type="Proteomes" id="UP000002200">
    <property type="component" value="Chromosome"/>
</dbReference>
<dbReference type="GO" id="GO:0003677">
    <property type="term" value="F:DNA binding"/>
    <property type="evidence" value="ECO:0007669"/>
    <property type="project" value="UniProtKB-UniRule"/>
</dbReference>
<dbReference type="GO" id="GO:0051301">
    <property type="term" value="P:cell division"/>
    <property type="evidence" value="ECO:0007669"/>
    <property type="project" value="UniProtKB-UniRule"/>
</dbReference>
<dbReference type="GO" id="GO:0043937">
    <property type="term" value="P:regulation of sporulation"/>
    <property type="evidence" value="ECO:0007669"/>
    <property type="project" value="InterPro"/>
</dbReference>
<dbReference type="Gene3D" id="3.10.28.10">
    <property type="entry name" value="Homing endonucleases"/>
    <property type="match status" value="1"/>
</dbReference>
<dbReference type="HAMAP" id="MF_01420">
    <property type="entry name" value="HTH_type_WhiA"/>
    <property type="match status" value="1"/>
</dbReference>
<dbReference type="InterPro" id="IPR027434">
    <property type="entry name" value="Homing_endonucl"/>
</dbReference>
<dbReference type="InterPro" id="IPR018478">
    <property type="entry name" value="Sporu_reg_WhiA_N_dom"/>
</dbReference>
<dbReference type="InterPro" id="IPR003802">
    <property type="entry name" value="Sporulation_regulator_WhiA"/>
</dbReference>
<dbReference type="InterPro" id="IPR023054">
    <property type="entry name" value="Sporulation_regulator_WhiA_C"/>
</dbReference>
<dbReference type="InterPro" id="IPR039518">
    <property type="entry name" value="WhiA_LAGLIDADG_dom"/>
</dbReference>
<dbReference type="NCBIfam" id="TIGR00647">
    <property type="entry name" value="DNA_bind_WhiA"/>
    <property type="match status" value="1"/>
</dbReference>
<dbReference type="PANTHER" id="PTHR37307">
    <property type="entry name" value="CELL DIVISION PROTEIN WHIA-RELATED"/>
    <property type="match status" value="1"/>
</dbReference>
<dbReference type="PANTHER" id="PTHR37307:SF1">
    <property type="entry name" value="CELL DIVISION PROTEIN WHIA-RELATED"/>
    <property type="match status" value="1"/>
</dbReference>
<dbReference type="Pfam" id="PF02650">
    <property type="entry name" value="HTH_WhiA"/>
    <property type="match status" value="1"/>
</dbReference>
<dbReference type="Pfam" id="PF14527">
    <property type="entry name" value="LAGLIDADG_WhiA"/>
    <property type="match status" value="1"/>
</dbReference>
<dbReference type="Pfam" id="PF10298">
    <property type="entry name" value="WhiA_N"/>
    <property type="match status" value="1"/>
</dbReference>
<dbReference type="SUPFAM" id="SSF55608">
    <property type="entry name" value="Homing endonucleases"/>
    <property type="match status" value="1"/>
</dbReference>
<feature type="chain" id="PRO_0000376609" description="Probable cell division protein WhiA">
    <location>
        <begin position="1"/>
        <end position="319"/>
    </location>
</feature>
<feature type="DNA-binding region" description="H-T-H motif" evidence="1">
    <location>
        <begin position="277"/>
        <end position="310"/>
    </location>
</feature>
<name>WHIA_TROWT</name>
<keyword id="KW-0131">Cell cycle</keyword>
<keyword id="KW-0132">Cell division</keyword>
<keyword id="KW-0238">DNA-binding</keyword>
<keyword id="KW-1185">Reference proteome</keyword>
<evidence type="ECO:0000255" key="1">
    <source>
        <dbReference type="HAMAP-Rule" id="MF_01420"/>
    </source>
</evidence>
<sequence>MNSLLQALHLLRCDLLSLPIGDAQTRSAELTALLRFGADLNIIKRRVVIEVKLCGSLLLNRVESVLRNIYGITPKLIRSTPRNDIGESCFLLRIDDPSLARKLGLIDTSLAPVRGLPNHLALASGSALKGLVRGAILASGVFTESTRKFAMEVYAPSNETALCLQGSINKLNVIAKIKEVRGSYKVVIRDIDNVAPLLRNVGARNSVEKIEQFIKLRHPENLGPRLPNFDDANLRRSAIAAASSVRRIERALQILKGDAPQHLLYAGQLRLNNTHASLEELGKLAEPAMTKDAIAGRIRRLLCLADKRAKTLGIPDTFS</sequence>